<keyword id="KW-0007">Acetylation</keyword>
<keyword id="KW-0072">Autophagy</keyword>
<keyword id="KW-0175">Coiled coil</keyword>
<keyword id="KW-0968">Cytoplasmic vesicle</keyword>
<keyword id="KW-0967">Endosome</keyword>
<keyword id="KW-0458">Lysosome</keyword>
<keyword id="KW-0472">Membrane</keyword>
<keyword id="KW-0479">Metal-binding</keyword>
<keyword id="KW-0597">Phosphoprotein</keyword>
<keyword id="KW-0653">Protein transport</keyword>
<keyword id="KW-1267">Proteomics identification</keyword>
<keyword id="KW-1185">Reference proteome</keyword>
<keyword id="KW-0813">Transport</keyword>
<keyword id="KW-0862">Zinc</keyword>
<keyword id="KW-0863">Zinc-finger</keyword>
<evidence type="ECO:0000250" key="1">
    <source>
        <dbReference type="UniProtKB" id="Q8R307"/>
    </source>
</evidence>
<evidence type="ECO:0000255" key="2"/>
<evidence type="ECO:0000256" key="3">
    <source>
        <dbReference type="SAM" id="MobiDB-lite"/>
    </source>
</evidence>
<evidence type="ECO:0000269" key="4">
    <source>
    </source>
</evidence>
<evidence type="ECO:0000269" key="5">
    <source>
    </source>
</evidence>
<evidence type="ECO:0000269" key="6">
    <source>
    </source>
</evidence>
<evidence type="ECO:0000269" key="7">
    <source>
    </source>
</evidence>
<evidence type="ECO:0000269" key="8">
    <source>
    </source>
</evidence>
<evidence type="ECO:0000269" key="9">
    <source>
    </source>
</evidence>
<evidence type="ECO:0000269" key="10">
    <source>
    </source>
</evidence>
<evidence type="ECO:0000269" key="11">
    <source>
    </source>
</evidence>
<evidence type="ECO:0000269" key="12">
    <source>
    </source>
</evidence>
<evidence type="ECO:0000269" key="13">
    <source>
    </source>
</evidence>
<evidence type="ECO:0000305" key="14"/>
<evidence type="ECO:0000305" key="15">
    <source>
    </source>
</evidence>
<evidence type="ECO:0000305" key="16">
    <source>
    </source>
</evidence>
<evidence type="ECO:0000305" key="17">
    <source>
    </source>
</evidence>
<evidence type="ECO:0000312" key="18">
    <source>
        <dbReference type="HGNC" id="HGNC:15972"/>
    </source>
</evidence>
<evidence type="ECO:0007744" key="19">
    <source>
    </source>
</evidence>
<evidence type="ECO:0007744" key="20">
    <source>
    </source>
</evidence>
<evidence type="ECO:0007744" key="21">
    <source>
    </source>
</evidence>
<evidence type="ECO:0007744" key="22">
    <source>
    </source>
</evidence>
<evidence type="ECO:0007744" key="23">
    <source>
    </source>
</evidence>
<gene>
    <name evidence="18" type="primary">VPS18</name>
    <name type="synonym">KIAA1475</name>
</gene>
<name>VPS18_HUMAN</name>
<feature type="initiator methionine" description="Removed" evidence="21 22">
    <location>
        <position position="1"/>
    </location>
</feature>
<feature type="chain" id="PRO_0000055906" description="Vacuolar protein sorting-associated protein 18 homolog">
    <location>
        <begin position="2"/>
        <end position="973"/>
    </location>
</feature>
<feature type="repeat" description="CHCR">
    <location>
        <begin position="618"/>
        <end position="772"/>
    </location>
</feature>
<feature type="zinc finger region" description="RING-type">
    <location>
        <begin position="853"/>
        <end position="947"/>
    </location>
</feature>
<feature type="region of interest" description="Disordered" evidence="3">
    <location>
        <begin position="903"/>
        <end position="929"/>
    </location>
</feature>
<feature type="coiled-coil region" evidence="2">
    <location>
        <begin position="454"/>
        <end position="481"/>
    </location>
</feature>
<feature type="coiled-coil region" evidence="2">
    <location>
        <begin position="802"/>
        <end position="848"/>
    </location>
</feature>
<feature type="modified residue" description="N-acetylalanine" evidence="21 22">
    <location>
        <position position="2"/>
    </location>
</feature>
<feature type="modified residue" description="Phosphoserine" evidence="23">
    <location>
        <position position="3"/>
    </location>
</feature>
<feature type="modified residue" description="Phosphoserine" evidence="23">
    <location>
        <position position="11"/>
    </location>
</feature>
<feature type="modified residue" description="Phosphoserine" evidence="23">
    <location>
        <position position="13"/>
    </location>
</feature>
<feature type="modified residue" description="N6-acetyllysine" evidence="20">
    <location>
        <position position="362"/>
    </location>
</feature>
<feature type="modified residue" description="Phosphoserine" evidence="19">
    <location>
        <position position="689"/>
    </location>
</feature>
<feature type="modified residue" description="Phosphoserine" evidence="23">
    <location>
        <position position="912"/>
    </location>
</feature>
<feature type="sequence variant" id="VAR_035950" description="In a colorectal cancer sample; somatic mutation." evidence="5">
    <original>A</original>
    <variation>S</variation>
    <location>
        <position position="913"/>
    </location>
</feature>
<comment type="function">
    <text evidence="1 12 15 16 17">Plays a role in vesicle-mediated protein trafficking to lysosomal compartments including the endocytic membrane transport and autophagic pathways. Believed to act as a core component of the putative HOPS and CORVET endosomal tethering complexes which are proposed to be involved in the Rab5-to-Rab7 endosome conversion probably implicating MON1A/B, and via binding SNAREs and SNARE complexes to mediate tethering and docking events during SNARE-mediated membrane fusion. The HOPS complex is proposed to be recruited to Rab7 on the late endosomal membrane and to regulate late endocytic, phagocytic and autophagic traffic towards lysosomes. The CORVET complex is proposed to function as a Rab5 effector to mediate early endosome fusion probably in specific endosome subpopulations (PubMed:11382755, PubMed:23351085, PubMed:24554770, PubMed:25783203). Required for fusion of endosomes and autophagosomes with lysosomes (PubMed:25783203). Involved in dendrite development of Pukinje cells (By similarity).</text>
</comment>
<comment type="subunit">
    <text evidence="1 4 7 9 10 11 12 13 16">Core component of at least two putative endosomal tethering complexes, the homotypic fusion and vacuole protein sorting (HOPS) complex and the class C core vacuole/endosome tethering (CORVET) complex. Their common core is composed of the class C Vps proteins VPS11, VPS16, VPS18 and VPS33A, which in HOPS further associates with VPS39 and VPS41 and in CORVET with VPS8 and TGFBRAP1 (PubMed:23351085, PubMed:23901104, PubMed:25783203). Interacts with RAB5C (By similarity). Interacts with HOOK1 (By similarity). Interacts with STX7, MON1B (PubMed:20434987, PubMed:24554770). Associates with adaptor protein complex 3 (AP-3) and clathrin:AP-3 complexes (By similarity). Interacts with SYNPO2 (PubMed:23434281). Interacts with PLEKHM1 (PubMed:28325809).</text>
</comment>
<comment type="interaction">
    <interactant intactId="EBI-1053363">
        <id>Q9P253</id>
    </interactant>
    <interactant intactId="EBI-2655311">
        <id>Q7L1V2</id>
        <label>MON1B</label>
    </interactant>
    <organismsDiffer>false</organismsDiffer>
    <experiments>2</experiments>
</comment>
<comment type="interaction">
    <interactant intactId="EBI-1053363">
        <id>Q9P253</id>
    </interactant>
    <interactant intactId="EBI-3221827">
        <id>O15400</id>
        <label>STX7</label>
    </interactant>
    <organismsDiffer>false</organismsDiffer>
    <experiments>2</experiments>
</comment>
<comment type="interaction">
    <interactant intactId="EBI-1053363">
        <id>Q9P253</id>
    </interactant>
    <interactant intactId="EBI-373380">
        <id>Q9H270</id>
        <label>VPS11</label>
    </interactant>
    <organismsDiffer>false</organismsDiffer>
    <experiments>11</experiments>
</comment>
<comment type="interaction">
    <interactant intactId="EBI-1053363">
        <id>Q9P253</id>
    </interactant>
    <interactant intactId="EBI-2655929">
        <id>Q9H269</id>
        <label>VPS16</label>
    </interactant>
    <organismsDiffer>false</organismsDiffer>
    <experiments>15</experiments>
</comment>
<comment type="interaction">
    <interactant intactId="EBI-1053363">
        <id>Q9P253</id>
    </interactant>
    <interactant intactId="EBI-2527283">
        <id>Q96AX1</id>
        <label>VPS33A</label>
    </interactant>
    <organismsDiffer>false</organismsDiffer>
    <experiments>6</experiments>
</comment>
<comment type="interaction">
    <interactant intactId="EBI-1053363">
        <id>Q9P253</id>
    </interactant>
    <interactant intactId="EBI-1050197">
        <id>Q96JC1</id>
        <label>VPS39</label>
    </interactant>
    <organismsDiffer>false</organismsDiffer>
    <experiments>2</experiments>
</comment>
<comment type="interaction">
    <interactant intactId="EBI-1053363">
        <id>Q9P253</id>
    </interactant>
    <interactant intactId="EBI-2130459">
        <id>P49754</id>
        <label>VPS41</label>
    </interactant>
    <organismsDiffer>false</organismsDiffer>
    <experiments>6</experiments>
</comment>
<comment type="interaction">
    <interactant intactId="EBI-1053363">
        <id>Q9P253</id>
    </interactant>
    <interactant intactId="EBI-918669">
        <id>Q63615</id>
        <label>Vps33a</label>
    </interactant>
    <organismsDiffer>true</organismsDiffer>
    <experiments>2</experiments>
</comment>
<comment type="subcellular location">
    <subcellularLocation>
        <location evidence="4">Late endosome membrane</location>
        <topology evidence="4">Peripheral membrane protein</topology>
        <orientation evidence="14">Cytoplasmic side</orientation>
    </subcellularLocation>
    <subcellularLocation>
        <location evidence="4 8">Lysosome membrane</location>
        <topology evidence="4">Peripheral membrane protein</topology>
        <orientation evidence="14">Cytoplasmic side</orientation>
    </subcellularLocation>
    <subcellularLocation>
        <location evidence="6">Early endosome</location>
    </subcellularLocation>
    <subcellularLocation>
        <location evidence="14">Cytoplasmic vesicle</location>
        <location evidence="14">Autophagosome</location>
    </subcellularLocation>
    <subcellularLocation>
        <location evidence="14">Cytoplasmic vesicle</location>
        <location evidence="14">Clathrin-coated vesicle</location>
    </subcellularLocation>
    <text>Cytoplasmic, peripheral membrane protein associated with early endosomes and late endosomes/lysosomes.</text>
</comment>
<comment type="tissue specificity">
    <text evidence="4">Ubiquitous. Expression was highest in heart and low in lung.</text>
</comment>
<comment type="similarity">
    <text evidence="14">Belongs to the VPS18 family.</text>
</comment>
<comment type="sequence caution" evidence="14">
    <conflict type="miscellaneous discrepancy">
        <sequence resource="EMBL-CDS" id="AAH01513"/>
    </conflict>
    <text>Unlikely isoform. Aberrant splice sites.</text>
</comment>
<comment type="sequence caution" evidence="14">
    <conflict type="erroneous initiation">
        <sequence resource="EMBL-CDS" id="BAA95999"/>
    </conflict>
    <text>Extended N-terminus.</text>
</comment>
<reference key="1">
    <citation type="journal article" date="2001" name="Gene">
        <title>Molecular cloning and characterization of human VPS18, VPS11, VPS16, and VPS33.</title>
        <authorList>
            <person name="Huizing M."/>
            <person name="Didier A."/>
            <person name="Walenta J."/>
            <person name="Anikster Y."/>
            <person name="Gahl W.A."/>
            <person name="Kraemer H."/>
        </authorList>
    </citation>
    <scope>NUCLEOTIDE SEQUENCE [MRNA]</scope>
</reference>
<reference key="2">
    <citation type="journal article" date="2000" name="DNA Res.">
        <title>Prediction of the coding sequences of unidentified human genes. XVII. The complete sequences of 100 new cDNA clones from brain which code for large proteins in vitro.</title>
        <authorList>
            <person name="Nagase T."/>
            <person name="Kikuno R."/>
            <person name="Ishikawa K."/>
            <person name="Hirosawa M."/>
            <person name="Ohara O."/>
        </authorList>
    </citation>
    <scope>NUCLEOTIDE SEQUENCE [LARGE SCALE MRNA]</scope>
    <source>
        <tissue>Brain</tissue>
    </source>
</reference>
<reference key="3">
    <citation type="journal article" date="2007" name="BMC Genomics">
        <title>The full-ORF clone resource of the German cDNA consortium.</title>
        <authorList>
            <person name="Bechtel S."/>
            <person name="Rosenfelder H."/>
            <person name="Duda A."/>
            <person name="Schmidt C.P."/>
            <person name="Ernst U."/>
            <person name="Wellenreuther R."/>
            <person name="Mehrle A."/>
            <person name="Schuster C."/>
            <person name="Bahr A."/>
            <person name="Bloecker H."/>
            <person name="Heubner D."/>
            <person name="Hoerlein A."/>
            <person name="Michel G."/>
            <person name="Wedler H."/>
            <person name="Koehrer K."/>
            <person name="Ottenwaelder B."/>
            <person name="Poustka A."/>
            <person name="Wiemann S."/>
            <person name="Schupp I."/>
        </authorList>
    </citation>
    <scope>NUCLEOTIDE SEQUENCE [LARGE SCALE MRNA]</scope>
    <source>
        <tissue>Melanoma</tissue>
    </source>
</reference>
<reference key="4">
    <citation type="journal article" date="2004" name="Genome Res.">
        <title>The status, quality, and expansion of the NIH full-length cDNA project: the Mammalian Gene Collection (MGC).</title>
        <authorList>
            <consortium name="The MGC Project Team"/>
        </authorList>
    </citation>
    <scope>NUCLEOTIDE SEQUENCE [LARGE SCALE MRNA]</scope>
    <source>
        <tissue>Lung</tissue>
    </source>
</reference>
<reference key="5">
    <citation type="journal article" date="2001" name="J. Biol. Chem.">
        <title>Molecular characterization of mammalian homologues of class C Vps proteins that interact with syntaxin-7.</title>
        <authorList>
            <person name="Kim B.Y."/>
            <person name="Kraemer H."/>
            <person name="Yamamoto A."/>
            <person name="Kominami E."/>
            <person name="Kohsaka S."/>
            <person name="Akazawa C."/>
        </authorList>
    </citation>
    <scope>FUNCTION</scope>
    <scope>SUBUNIT</scope>
    <scope>INTERACTION WITH STX7; VPS33A AND VPS11</scope>
    <scope>SUBCELLULAR LOCATION</scope>
    <scope>TISSUE SPECIFICITY</scope>
</reference>
<reference key="6">
    <citation type="journal article" date="2007" name="Traffic">
        <title>Integral and associated lysosomal membrane proteins.</title>
        <authorList>
            <person name="Schroeder B."/>
            <person name="Wrocklage C."/>
            <person name="Pan C."/>
            <person name="Jaeger R."/>
            <person name="Koesters B."/>
            <person name="Schaefer H."/>
            <person name="Elsaesser H.-P."/>
            <person name="Mann M."/>
            <person name="Hasilik A."/>
        </authorList>
    </citation>
    <scope>SUBCELLULAR LOCATION [LARGE SCALE ANALYSIS]</scope>
    <source>
        <tissue>Placenta</tissue>
    </source>
</reference>
<reference key="7">
    <citation type="journal article" date="2008" name="Nat. Cell Biol.">
        <title>Beclin1-binding UVRAG targets the class C Vps complex to coordinate autophagosome maturation and endocytic trafficking.</title>
        <authorList>
            <person name="Liang C."/>
            <person name="Lee J.S."/>
            <person name="Inn K.S."/>
            <person name="Gack M.U."/>
            <person name="Li Q."/>
            <person name="Roberts E.A."/>
            <person name="Vergne I."/>
            <person name="Deretic V."/>
            <person name="Feng P."/>
            <person name="Akazawa C."/>
            <person name="Jung J.U."/>
        </authorList>
    </citation>
    <scope>SUBCELLULAR LOCATION</scope>
</reference>
<reference key="8">
    <citation type="journal article" date="2008" name="Proc. Natl. Acad. Sci. U.S.A.">
        <title>A quantitative atlas of mitotic phosphorylation.</title>
        <authorList>
            <person name="Dephoure N."/>
            <person name="Zhou C."/>
            <person name="Villen J."/>
            <person name="Beausoleil S.A."/>
            <person name="Bakalarski C.E."/>
            <person name="Elledge S.J."/>
            <person name="Gygi S.P."/>
        </authorList>
    </citation>
    <scope>PHOSPHORYLATION [LARGE SCALE ANALYSIS] AT SER-689</scope>
    <scope>IDENTIFICATION BY MASS SPECTROMETRY [LARGE SCALE ANALYSIS]</scope>
    <source>
        <tissue>Cervix carcinoma</tissue>
    </source>
</reference>
<reference key="9">
    <citation type="journal article" date="2009" name="Science">
        <title>Lysine acetylation targets protein complexes and co-regulates major cellular functions.</title>
        <authorList>
            <person name="Choudhary C."/>
            <person name="Kumar C."/>
            <person name="Gnad F."/>
            <person name="Nielsen M.L."/>
            <person name="Rehman M."/>
            <person name="Walther T.C."/>
            <person name="Olsen J.V."/>
            <person name="Mann M."/>
        </authorList>
    </citation>
    <scope>ACETYLATION [LARGE SCALE ANALYSIS] AT LYS-362</scope>
    <scope>IDENTIFICATION BY MASS SPECTROMETRY [LARGE SCALE ANALYSIS]</scope>
</reference>
<reference key="10">
    <citation type="journal article" date="2010" name="Cell">
        <title>Identification of the switch in early-to-late endosome transition.</title>
        <authorList>
            <person name="Poteryaev D."/>
            <person name="Datta S."/>
            <person name="Ackema K."/>
            <person name="Zerial M."/>
            <person name="Spang A."/>
        </authorList>
    </citation>
    <scope>INTERACTION WITH MON1B</scope>
</reference>
<reference key="11">
    <citation type="journal article" date="2011" name="BMC Syst. Biol.">
        <title>Initial characterization of the human central proteome.</title>
        <authorList>
            <person name="Burkard T.R."/>
            <person name="Planyavsky M."/>
            <person name="Kaupe I."/>
            <person name="Breitwieser F.P."/>
            <person name="Buerckstuemmer T."/>
            <person name="Bennett K.L."/>
            <person name="Superti-Furga G."/>
            <person name="Colinge J."/>
        </authorList>
    </citation>
    <scope>IDENTIFICATION BY MASS SPECTROMETRY [LARGE SCALE ANALYSIS]</scope>
</reference>
<reference key="12">
    <citation type="journal article" date="2011" name="Immunity">
        <title>Lysosomal trafficking, antigen presentation, and microbial killing are controlled by the Arf-like GTPase Arl8b.</title>
        <authorList>
            <person name="Garg S."/>
            <person name="Sharma M."/>
            <person name="Ung C."/>
            <person name="Tuli A."/>
            <person name="Barral D.C."/>
            <person name="Hava D.L."/>
            <person name="Veerapen N."/>
            <person name="Besra G.S."/>
            <person name="Hacohen N."/>
            <person name="Brenner M.B."/>
        </authorList>
    </citation>
    <scope>SUBCELLULAR LOCATION</scope>
</reference>
<reference key="13">
    <citation type="journal article" date="2012" name="Mol. Cell. Proteomics">
        <title>Comparative large-scale characterisation of plant vs. mammal proteins reveals similar and idiosyncratic N-alpha acetylation features.</title>
        <authorList>
            <person name="Bienvenut W.V."/>
            <person name="Sumpton D."/>
            <person name="Martinez A."/>
            <person name="Lilla S."/>
            <person name="Espagne C."/>
            <person name="Meinnel T."/>
            <person name="Giglione C."/>
        </authorList>
    </citation>
    <scope>ACETYLATION [LARGE SCALE ANALYSIS] AT ALA-2</scope>
    <scope>CLEAVAGE OF INITIATOR METHIONINE [LARGE SCALE ANALYSIS]</scope>
    <scope>IDENTIFICATION BY MASS SPECTROMETRY [LARGE SCALE ANALYSIS]</scope>
</reference>
<reference key="14">
    <citation type="journal article" date="2012" name="Proc. Natl. Acad. Sci. U.S.A.">
        <title>N-terminal acetylome analyses and functional insights of the N-terminal acetyltransferase NatB.</title>
        <authorList>
            <person name="Van Damme P."/>
            <person name="Lasa M."/>
            <person name="Polevoda B."/>
            <person name="Gazquez C."/>
            <person name="Elosegui-Artola A."/>
            <person name="Kim D.S."/>
            <person name="De Juan-Pardo E."/>
            <person name="Demeyer K."/>
            <person name="Hole K."/>
            <person name="Larrea E."/>
            <person name="Timmerman E."/>
            <person name="Prieto J."/>
            <person name="Arnesen T."/>
            <person name="Sherman F."/>
            <person name="Gevaert K."/>
            <person name="Aldabe R."/>
        </authorList>
    </citation>
    <scope>ACETYLATION [LARGE SCALE ANALYSIS] AT ALA-2</scope>
    <scope>CLEAVAGE OF INITIATOR METHIONINE [LARGE SCALE ANALYSIS]</scope>
    <scope>IDENTIFICATION BY MASS SPECTROMETRY [LARGE SCALE ANALYSIS]</scope>
</reference>
<reference key="15">
    <citation type="journal article" date="2013" name="Curr. Biol.">
        <title>Cellular mechanotransduction relies on tension-induced and chaperone-assisted autophagy.</title>
        <authorList>
            <person name="Ulbricht A."/>
            <person name="Eppler F.J."/>
            <person name="Tapia V.E."/>
            <person name="van der Ven P.F."/>
            <person name="Hampe N."/>
            <person name="Hersch N."/>
            <person name="Vakeel P."/>
            <person name="Stadel D."/>
            <person name="Haas A."/>
            <person name="Saftig P."/>
            <person name="Behrends C."/>
            <person name="Fuerst D.O."/>
            <person name="Volkmer R."/>
            <person name="Hoffmann B."/>
            <person name="Kolanus W."/>
            <person name="Hoehfeld J."/>
        </authorList>
    </citation>
    <scope>INTERACTION WITH SYNPO2</scope>
</reference>
<reference key="16">
    <citation type="journal article" date="2013" name="FEBS J.">
        <title>Tethering complexes in the endocytic pathway: CORVET and HOPS.</title>
        <authorList>
            <person name="Solinger J.A."/>
            <person name="Spang A."/>
        </authorList>
    </citation>
    <scope>REVIEW ON THE HOPS AND CORVET COMPLEXES</scope>
</reference>
<reference key="17">
    <citation type="journal article" date="2013" name="J. Proteome Res.">
        <title>Toward a comprehensive characterization of a human cancer cell phosphoproteome.</title>
        <authorList>
            <person name="Zhou H."/>
            <person name="Di Palma S."/>
            <person name="Preisinger C."/>
            <person name="Peng M."/>
            <person name="Polat A.N."/>
            <person name="Heck A.J."/>
            <person name="Mohammed S."/>
        </authorList>
    </citation>
    <scope>PHOSPHORYLATION [LARGE SCALE ANALYSIS] AT SER-3; SER-11; SER-13 AND SER-912</scope>
    <scope>IDENTIFICATION BY MASS SPECTROMETRY [LARGE SCALE ANALYSIS]</scope>
    <source>
        <tissue>Erythroleukemia</tissue>
    </source>
</reference>
<reference key="18">
    <citation type="journal article" date="2013" name="Proc. Natl. Acad. Sci. U.S.A.">
        <title>Structural basis of Vps33A recruitment to the human HOPS complex by Vps16.</title>
        <authorList>
            <person name="Graham S.C."/>
            <person name="Wartosch L."/>
            <person name="Gray S.R."/>
            <person name="Scourfield E.J."/>
            <person name="Deane J.E."/>
            <person name="Luzio J.P."/>
            <person name="Owen D.J."/>
        </authorList>
    </citation>
    <scope>INTERACTION WITH VPS16 AND VPS41</scope>
</reference>
<reference key="19">
    <citation type="journal article" date="2014" name="Mol. Biol. Cell">
        <title>The HOPS complex mediates autophagosome-lysosome fusion through interaction with syntaxin 17.</title>
        <authorList>
            <person name="Jiang P."/>
            <person name="Nishimura T."/>
            <person name="Sakamaki Y."/>
            <person name="Itakura E."/>
            <person name="Hatta T."/>
            <person name="Natsume T."/>
            <person name="Mizushima N."/>
        </authorList>
    </citation>
    <scope>FUNCTION OF THE HOPS COMPLEX</scope>
    <scope>INTERACTION WITH STX17</scope>
</reference>
<reference key="20">
    <citation type="journal article" date="2015" name="Traffic">
        <title>Recruitment of VPS33A to HOPS by VPS16 Is Required for Lysosome Fusion with Endosomes and Autophagosomes.</title>
        <authorList>
            <person name="Wartosch L."/>
            <person name="Guenesdogan U."/>
            <person name="Graham S.C."/>
            <person name="Luzio J.P."/>
        </authorList>
    </citation>
    <scope>FUNCTION</scope>
    <scope>FUNCTION OF THE HOPS COMPLEX</scope>
    <scope>INTERACTION WITH VPS33A AND VPS16</scope>
</reference>
<reference key="21">
    <citation type="journal article" date="2017" name="J. Cell Biol.">
        <title>The Rab7 effector PLEKHM1 binds Arl8b to promote cargo traffic to lysosomes.</title>
        <authorList>
            <person name="Marwaha R."/>
            <person name="Arya S.B."/>
            <person name="Jagga D."/>
            <person name="Kaur H."/>
            <person name="Tuli A."/>
            <person name="Sharma M."/>
        </authorList>
    </citation>
    <scope>INTERACTION WITH PLEKHM1</scope>
</reference>
<reference key="22">
    <citation type="journal article" date="2006" name="Science">
        <title>The consensus coding sequences of human breast and colorectal cancers.</title>
        <authorList>
            <person name="Sjoeblom T."/>
            <person name="Jones S."/>
            <person name="Wood L.D."/>
            <person name="Parsons D.W."/>
            <person name="Lin J."/>
            <person name="Barber T.D."/>
            <person name="Mandelker D."/>
            <person name="Leary R.J."/>
            <person name="Ptak J."/>
            <person name="Silliman N."/>
            <person name="Szabo S."/>
            <person name="Buckhaults P."/>
            <person name="Farrell C."/>
            <person name="Meeh P."/>
            <person name="Markowitz S.D."/>
            <person name="Willis J."/>
            <person name="Dawson D."/>
            <person name="Willson J.K.V."/>
            <person name="Gazdar A.F."/>
            <person name="Hartigan J."/>
            <person name="Wu L."/>
            <person name="Liu C."/>
            <person name="Parmigiani G."/>
            <person name="Park B.H."/>
            <person name="Bachman K.E."/>
            <person name="Papadopoulos N."/>
            <person name="Vogelstein B."/>
            <person name="Kinzler K.W."/>
            <person name="Velculescu V.E."/>
        </authorList>
    </citation>
    <scope>VARIANT [LARGE SCALE ANALYSIS] SER-913</scope>
</reference>
<dbReference type="EMBL" id="AF308802">
    <property type="protein sequence ID" value="AAG34679.1"/>
    <property type="molecule type" value="mRNA"/>
</dbReference>
<dbReference type="EMBL" id="AB040908">
    <property type="protein sequence ID" value="BAA95999.1"/>
    <property type="status" value="ALT_INIT"/>
    <property type="molecule type" value="mRNA"/>
</dbReference>
<dbReference type="EMBL" id="AL713725">
    <property type="protein sequence ID" value="CAD28515.1"/>
    <property type="molecule type" value="mRNA"/>
</dbReference>
<dbReference type="EMBL" id="BC001513">
    <property type="protein sequence ID" value="AAH01513.1"/>
    <property type="status" value="ALT_SEQ"/>
    <property type="molecule type" value="mRNA"/>
</dbReference>
<dbReference type="CCDS" id="CCDS10069.1"/>
<dbReference type="RefSeq" id="NP_065908.1">
    <property type="nucleotide sequence ID" value="NM_020857.3"/>
</dbReference>
<dbReference type="SMR" id="Q9P253"/>
<dbReference type="BioGRID" id="121664">
    <property type="interactions" value="161"/>
</dbReference>
<dbReference type="ComplexPortal" id="CPX-6212">
    <property type="entry name" value="HOPS tethering complex"/>
</dbReference>
<dbReference type="ComplexPortal" id="CPX-6213">
    <property type="entry name" value="CORVET tethering complex"/>
</dbReference>
<dbReference type="CORUM" id="Q9P253"/>
<dbReference type="FunCoup" id="Q9P253">
    <property type="interactions" value="2714"/>
</dbReference>
<dbReference type="IntAct" id="Q9P253">
    <property type="interactions" value="91"/>
</dbReference>
<dbReference type="MINT" id="Q9P253"/>
<dbReference type="STRING" id="9606.ENSP00000220509"/>
<dbReference type="GlyGen" id="Q9P253">
    <property type="glycosylation" value="1 site, 1 O-linked glycan (1 site)"/>
</dbReference>
<dbReference type="iPTMnet" id="Q9P253"/>
<dbReference type="PhosphoSitePlus" id="Q9P253"/>
<dbReference type="SwissPalm" id="Q9P253"/>
<dbReference type="BioMuta" id="VPS18"/>
<dbReference type="DMDM" id="23396938"/>
<dbReference type="jPOST" id="Q9P253"/>
<dbReference type="MassIVE" id="Q9P253"/>
<dbReference type="PaxDb" id="9606-ENSP00000220509"/>
<dbReference type="PeptideAtlas" id="Q9P253"/>
<dbReference type="ProteomicsDB" id="83731"/>
<dbReference type="Pumba" id="Q9P253"/>
<dbReference type="Antibodypedia" id="23197">
    <property type="antibodies" value="162 antibodies from 24 providers"/>
</dbReference>
<dbReference type="DNASU" id="57617"/>
<dbReference type="Ensembl" id="ENST00000220509.10">
    <property type="protein sequence ID" value="ENSP00000220509.5"/>
    <property type="gene ID" value="ENSG00000104142.11"/>
</dbReference>
<dbReference type="GeneID" id="57617"/>
<dbReference type="KEGG" id="hsa:57617"/>
<dbReference type="MANE-Select" id="ENST00000220509.10">
    <property type="protein sequence ID" value="ENSP00000220509.5"/>
    <property type="RefSeq nucleotide sequence ID" value="NM_020857.3"/>
    <property type="RefSeq protein sequence ID" value="NP_065908.1"/>
</dbReference>
<dbReference type="UCSC" id="uc001zne.3">
    <property type="organism name" value="human"/>
</dbReference>
<dbReference type="AGR" id="HGNC:15972"/>
<dbReference type="CTD" id="57617"/>
<dbReference type="DisGeNET" id="57617"/>
<dbReference type="GeneCards" id="VPS18"/>
<dbReference type="HGNC" id="HGNC:15972">
    <property type="gene designation" value="VPS18"/>
</dbReference>
<dbReference type="HPA" id="ENSG00000104142">
    <property type="expression patterns" value="Low tissue specificity"/>
</dbReference>
<dbReference type="MIM" id="608551">
    <property type="type" value="gene"/>
</dbReference>
<dbReference type="neXtProt" id="NX_Q9P253"/>
<dbReference type="OpenTargets" id="ENSG00000104142"/>
<dbReference type="PharmGKB" id="PA38069"/>
<dbReference type="VEuPathDB" id="HostDB:ENSG00000104142"/>
<dbReference type="eggNOG" id="KOG2034">
    <property type="taxonomic scope" value="Eukaryota"/>
</dbReference>
<dbReference type="GeneTree" id="ENSGT00940000153635"/>
<dbReference type="HOGENOM" id="CLU_003488_1_0_1"/>
<dbReference type="InParanoid" id="Q9P253"/>
<dbReference type="OMA" id="WIQREKW"/>
<dbReference type="OrthoDB" id="1845386at2759"/>
<dbReference type="PAN-GO" id="Q9P253">
    <property type="GO annotations" value="8 GO annotations based on evolutionary models"/>
</dbReference>
<dbReference type="PhylomeDB" id="Q9P253"/>
<dbReference type="TreeFam" id="TF105704"/>
<dbReference type="PathwayCommons" id="Q9P253"/>
<dbReference type="Reactome" id="R-HSA-9754560">
    <property type="pathway name" value="SARS-CoV-2 modulates autophagy"/>
</dbReference>
<dbReference type="SignaLink" id="Q9P253"/>
<dbReference type="SIGNOR" id="Q9P253"/>
<dbReference type="BioGRID-ORCS" id="57617">
    <property type="hits" value="615 hits in 1206 CRISPR screens"/>
</dbReference>
<dbReference type="CD-CODE" id="FB4E32DD">
    <property type="entry name" value="Presynaptic clusters and postsynaptic densities"/>
</dbReference>
<dbReference type="ChiTaRS" id="VPS18">
    <property type="organism name" value="human"/>
</dbReference>
<dbReference type="GeneWiki" id="VPS18"/>
<dbReference type="GenomeRNAi" id="57617"/>
<dbReference type="Pharos" id="Q9P253">
    <property type="development level" value="Tbio"/>
</dbReference>
<dbReference type="PRO" id="PR:Q9P253"/>
<dbReference type="Proteomes" id="UP000005640">
    <property type="component" value="Chromosome 15"/>
</dbReference>
<dbReference type="RNAct" id="Q9P253">
    <property type="molecule type" value="protein"/>
</dbReference>
<dbReference type="Bgee" id="ENSG00000104142">
    <property type="expression patterns" value="Expressed in pancreatic ductal cell and 158 other cell types or tissues"/>
</dbReference>
<dbReference type="ExpressionAtlas" id="Q9P253">
    <property type="expression patterns" value="baseline and differential"/>
</dbReference>
<dbReference type="GO" id="GO:0005884">
    <property type="term" value="C:actin filament"/>
    <property type="evidence" value="ECO:0007669"/>
    <property type="project" value="Ensembl"/>
</dbReference>
<dbReference type="GO" id="GO:0030123">
    <property type="term" value="C:AP-3 adaptor complex"/>
    <property type="evidence" value="ECO:0007669"/>
    <property type="project" value="Ensembl"/>
</dbReference>
<dbReference type="GO" id="GO:0005776">
    <property type="term" value="C:autophagosome"/>
    <property type="evidence" value="ECO:0007669"/>
    <property type="project" value="UniProtKB-SubCell"/>
</dbReference>
<dbReference type="GO" id="GO:0030136">
    <property type="term" value="C:clathrin-coated vesicle"/>
    <property type="evidence" value="ECO:0007669"/>
    <property type="project" value="UniProtKB-SubCell"/>
</dbReference>
<dbReference type="GO" id="GO:0033263">
    <property type="term" value="C:CORVET complex"/>
    <property type="evidence" value="ECO:0000303"/>
    <property type="project" value="ComplexPortal"/>
</dbReference>
<dbReference type="GO" id="GO:0005769">
    <property type="term" value="C:early endosome"/>
    <property type="evidence" value="ECO:0007669"/>
    <property type="project" value="UniProtKB-SubCell"/>
</dbReference>
<dbReference type="GO" id="GO:0005768">
    <property type="term" value="C:endosome"/>
    <property type="evidence" value="ECO:0000318"/>
    <property type="project" value="GO_Central"/>
</dbReference>
<dbReference type="GO" id="GO:0010008">
    <property type="term" value="C:endosome membrane"/>
    <property type="evidence" value="ECO:0000304"/>
    <property type="project" value="Reactome"/>
</dbReference>
<dbReference type="GO" id="GO:0098978">
    <property type="term" value="C:glutamatergic synapse"/>
    <property type="evidence" value="ECO:0000314"/>
    <property type="project" value="SynGO"/>
</dbReference>
<dbReference type="GO" id="GO:0030897">
    <property type="term" value="C:HOPS complex"/>
    <property type="evidence" value="ECO:0000314"/>
    <property type="project" value="UniProtKB"/>
</dbReference>
<dbReference type="GO" id="GO:0005770">
    <property type="term" value="C:late endosome"/>
    <property type="evidence" value="ECO:0000314"/>
    <property type="project" value="UniProtKB"/>
</dbReference>
<dbReference type="GO" id="GO:0031902">
    <property type="term" value="C:late endosome membrane"/>
    <property type="evidence" value="ECO:0007669"/>
    <property type="project" value="UniProtKB-SubCell"/>
</dbReference>
<dbReference type="GO" id="GO:0005765">
    <property type="term" value="C:lysosomal membrane"/>
    <property type="evidence" value="ECO:0007005"/>
    <property type="project" value="UniProtKB"/>
</dbReference>
<dbReference type="GO" id="GO:0005764">
    <property type="term" value="C:lysosome"/>
    <property type="evidence" value="ECO:0000314"/>
    <property type="project" value="UniProtKB"/>
</dbReference>
<dbReference type="GO" id="GO:0098793">
    <property type="term" value="C:presynapse"/>
    <property type="evidence" value="ECO:0007669"/>
    <property type="project" value="Ensembl"/>
</dbReference>
<dbReference type="GO" id="GO:0003779">
    <property type="term" value="F:actin binding"/>
    <property type="evidence" value="ECO:0007669"/>
    <property type="project" value="Ensembl"/>
</dbReference>
<dbReference type="GO" id="GO:0030674">
    <property type="term" value="F:protein-macromolecule adaptor activity"/>
    <property type="evidence" value="ECO:0000318"/>
    <property type="project" value="GO_Central"/>
</dbReference>
<dbReference type="GO" id="GO:0019905">
    <property type="term" value="F:syntaxin binding"/>
    <property type="evidence" value="ECO:0000314"/>
    <property type="project" value="UniProtKB"/>
</dbReference>
<dbReference type="GO" id="GO:0061630">
    <property type="term" value="F:ubiquitin protein ligase activity"/>
    <property type="evidence" value="ECO:0000315"/>
    <property type="project" value="FlyBase"/>
</dbReference>
<dbReference type="GO" id="GO:0008270">
    <property type="term" value="F:zinc ion binding"/>
    <property type="evidence" value="ECO:0007669"/>
    <property type="project" value="UniProtKB-KW"/>
</dbReference>
<dbReference type="GO" id="GO:0006914">
    <property type="term" value="P:autophagy"/>
    <property type="evidence" value="ECO:0007669"/>
    <property type="project" value="UniProtKB-KW"/>
</dbReference>
<dbReference type="GO" id="GO:0034058">
    <property type="term" value="P:endosomal vesicle fusion"/>
    <property type="evidence" value="ECO:0000303"/>
    <property type="project" value="ComplexPortal"/>
</dbReference>
<dbReference type="GO" id="GO:0007032">
    <property type="term" value="P:endosome organization"/>
    <property type="evidence" value="ECO:0000314"/>
    <property type="project" value="UniProtKB"/>
</dbReference>
<dbReference type="GO" id="GO:0008333">
    <property type="term" value="P:endosome to lysosome transport"/>
    <property type="evidence" value="ECO:0000315"/>
    <property type="project" value="UniProtKB"/>
</dbReference>
<dbReference type="GO" id="GO:0006886">
    <property type="term" value="P:intracellular protein transport"/>
    <property type="evidence" value="ECO:0007669"/>
    <property type="project" value="InterPro"/>
</dbReference>
<dbReference type="GO" id="GO:0007040">
    <property type="term" value="P:lysosome organization"/>
    <property type="evidence" value="ECO:0000314"/>
    <property type="project" value="UniProtKB"/>
</dbReference>
<dbReference type="GO" id="GO:0033147">
    <property type="term" value="P:negative regulation of intracellular estrogen receptor signaling pathway"/>
    <property type="evidence" value="ECO:0000316"/>
    <property type="project" value="FlyBase"/>
</dbReference>
<dbReference type="GO" id="GO:0048284">
    <property type="term" value="P:organelle fusion"/>
    <property type="evidence" value="ECO:0000318"/>
    <property type="project" value="GO_Central"/>
</dbReference>
<dbReference type="GO" id="GO:0016567">
    <property type="term" value="P:protein ubiquitination"/>
    <property type="evidence" value="ECO:0000315"/>
    <property type="project" value="FlyBase"/>
</dbReference>
<dbReference type="GO" id="GO:0035542">
    <property type="term" value="P:regulation of SNARE complex assembly"/>
    <property type="evidence" value="ECO:0000303"/>
    <property type="project" value="ComplexPortal"/>
</dbReference>
<dbReference type="GO" id="GO:2000300">
    <property type="term" value="P:regulation of synaptic vesicle exocytosis"/>
    <property type="evidence" value="ECO:0000314"/>
    <property type="project" value="SynGO"/>
</dbReference>
<dbReference type="GO" id="GO:0046718">
    <property type="term" value="P:symbiont entry into host cell"/>
    <property type="evidence" value="ECO:0007669"/>
    <property type="project" value="Ensembl"/>
</dbReference>
<dbReference type="GO" id="GO:0006904">
    <property type="term" value="P:vesicle docking involved in exocytosis"/>
    <property type="evidence" value="ECO:0000318"/>
    <property type="project" value="GO_Central"/>
</dbReference>
<dbReference type="CDD" id="cd16689">
    <property type="entry name" value="RING-H2_Vps18"/>
    <property type="match status" value="1"/>
</dbReference>
<dbReference type="InterPro" id="IPR000547">
    <property type="entry name" value="Clathrin_H-chain/VPS_repeat"/>
</dbReference>
<dbReference type="InterPro" id="IPR007810">
    <property type="entry name" value="Pep3_Vps18"/>
</dbReference>
<dbReference type="PANTHER" id="PTHR23323">
    <property type="entry name" value="VACUOLAR PROTEIN SORTING-ASSOCIATED PROTEIN"/>
    <property type="match status" value="1"/>
</dbReference>
<dbReference type="PANTHER" id="PTHR23323:SF26">
    <property type="entry name" value="VACUOLAR PROTEIN SORTING-ASSOCIATED PROTEIN 18 HOMOLOG"/>
    <property type="match status" value="1"/>
</dbReference>
<dbReference type="Pfam" id="PF05131">
    <property type="entry name" value="Pep3_Vps18"/>
    <property type="match status" value="1"/>
</dbReference>
<dbReference type="SUPFAM" id="SSF57850">
    <property type="entry name" value="RING/U-box"/>
    <property type="match status" value="1"/>
</dbReference>
<dbReference type="PROSITE" id="PS50236">
    <property type="entry name" value="CHCR"/>
    <property type="match status" value="1"/>
</dbReference>
<protein>
    <recommendedName>
        <fullName>Vacuolar protein sorting-associated protein 18 homolog</fullName>
        <shortName>hVPS18</shortName>
    </recommendedName>
</protein>
<accession>Q9P253</accession>
<accession>Q8TCG0</accession>
<accession>Q96DI3</accession>
<accession>Q9H268</accession>
<organism>
    <name type="scientific">Homo sapiens</name>
    <name type="common">Human</name>
    <dbReference type="NCBI Taxonomy" id="9606"/>
    <lineage>
        <taxon>Eukaryota</taxon>
        <taxon>Metazoa</taxon>
        <taxon>Chordata</taxon>
        <taxon>Craniata</taxon>
        <taxon>Vertebrata</taxon>
        <taxon>Euteleostomi</taxon>
        <taxon>Mammalia</taxon>
        <taxon>Eutheria</taxon>
        <taxon>Euarchontoglires</taxon>
        <taxon>Primates</taxon>
        <taxon>Haplorrhini</taxon>
        <taxon>Catarrhini</taxon>
        <taxon>Hominidae</taxon>
        <taxon>Homo</taxon>
    </lineage>
</organism>
<sequence>MASILDEYENSLSRSAVLQPGCPSVGIPHSGYVNAQLEKEVPIFTKQRIDFTPSERITSLVVSSNQLCMSLGKDTLLRIDLGKANEPNHVELGRKDDAKVHKMFLDHTGSHLLIALSSTEVLYVNRNGQKVRPLARWKGQLVESVGWNKALGTESSTGPILVGTAQGHIFEAELSASEGGLFGPAPDLYFRPLYVLNEEGGPAPVCSLEAERGPDGRSFVIATTRQRLFQFIGRAAEGAEAQGFSGLFAAYTDHPPPFREFPSNLGYSELAFYTPKLRSAPRAFAWMMGDGVLYGALDCGRPDSLLSEERVWEYPEGVGPGASPPLAIVLTQFHFLLLLADRVEAVCTLTGQVVLRDHFLEKFGPLKHMVKDSSTGQLWAYTERAVFRYHVQREARDVWRTYLDMNRFDLAKEYCRERPDCLDTVLAREADFCFRQRRYLESARCYALTQSYFEEIALKFLEARQEEALAEFLQRKLASLKPAERTQATLLTTWLTELYLSRLGALQGDPEALTLYRETKECFRTFLSSPRHKEWLFASRASIHELLASHGDTEHMVYFAVIMQDYERVVAYHCQHEAYEEALAVLARHRDPQLFYKFSPILIRHIPRQLVDAWIEMGSRLDARQLIPALVNYSQGGEVQQVSQAIRYMEFCVNVLGETEQAIHNYLLSLYARGRPDSLLAYLEQAGASPHRVHYDLKYALRLCAEHGHHRACVHVYKVLELYEEAVDLALQVDVDLAKQCADLPEEDEELRKKLWLKIARHVVQEEEDVQTAMACLASCPLLKIEDVLPFFPDFVTIDHFKEAICSSLKAYNHHIQELQREMEEATASAQRIRRDLQELRGRYGTVEPQDKCATCDFPLLNRPFYLFLCGHMFHADCLLQAVRPGLPAYKQARLEELQRKLGAAPPPAKGSARAKEAEGGAATAGPSREQLKADLDELVAAECVYCGELMIRSIDRPFIDPQRYEEEQLSWL</sequence>
<proteinExistence type="evidence at protein level"/>